<protein>
    <recommendedName>
        <fullName evidence="1">Probable cell division protein WhiA</fullName>
    </recommendedName>
</protein>
<keyword id="KW-0131">Cell cycle</keyword>
<keyword id="KW-0132">Cell division</keyword>
<keyword id="KW-0238">DNA-binding</keyword>
<keyword id="KW-1185">Reference proteome</keyword>
<gene>
    <name evidence="1" type="primary">whiA</name>
    <name type="ordered locus">CA_C0513</name>
</gene>
<feature type="chain" id="PRO_0000376455" description="Probable cell division protein WhiA">
    <location>
        <begin position="1"/>
        <end position="317"/>
    </location>
</feature>
<feature type="DNA-binding region" description="H-T-H motif" evidence="1">
    <location>
        <begin position="281"/>
        <end position="314"/>
    </location>
</feature>
<proteinExistence type="inferred from homology"/>
<dbReference type="EMBL" id="AE001437">
    <property type="protein sequence ID" value="AAK78493.1"/>
    <property type="molecule type" value="Genomic_DNA"/>
</dbReference>
<dbReference type="PIR" id="B96963">
    <property type="entry name" value="B96963"/>
</dbReference>
<dbReference type="RefSeq" id="NP_347153.1">
    <property type="nucleotide sequence ID" value="NC_003030.1"/>
</dbReference>
<dbReference type="RefSeq" id="WP_010963835.1">
    <property type="nucleotide sequence ID" value="NC_003030.1"/>
</dbReference>
<dbReference type="SMR" id="Q97LP1"/>
<dbReference type="STRING" id="272562.CA_C0513"/>
<dbReference type="DNASU" id="1116696"/>
<dbReference type="GeneID" id="44997022"/>
<dbReference type="KEGG" id="cac:CA_C0513"/>
<dbReference type="PATRIC" id="fig|272562.8.peg.712"/>
<dbReference type="eggNOG" id="COG1481">
    <property type="taxonomic scope" value="Bacteria"/>
</dbReference>
<dbReference type="HOGENOM" id="CLU_053282_0_0_9"/>
<dbReference type="OrthoDB" id="401278at2"/>
<dbReference type="Proteomes" id="UP000000814">
    <property type="component" value="Chromosome"/>
</dbReference>
<dbReference type="GO" id="GO:0003677">
    <property type="term" value="F:DNA binding"/>
    <property type="evidence" value="ECO:0007669"/>
    <property type="project" value="UniProtKB-UniRule"/>
</dbReference>
<dbReference type="GO" id="GO:0004519">
    <property type="term" value="F:endonuclease activity"/>
    <property type="evidence" value="ECO:0007669"/>
    <property type="project" value="InterPro"/>
</dbReference>
<dbReference type="GO" id="GO:0051301">
    <property type="term" value="P:cell division"/>
    <property type="evidence" value="ECO:0007669"/>
    <property type="project" value="UniProtKB-UniRule"/>
</dbReference>
<dbReference type="GO" id="GO:0043937">
    <property type="term" value="P:regulation of sporulation"/>
    <property type="evidence" value="ECO:0007669"/>
    <property type="project" value="InterPro"/>
</dbReference>
<dbReference type="Gene3D" id="3.10.28.10">
    <property type="entry name" value="Homing endonucleases"/>
    <property type="match status" value="1"/>
</dbReference>
<dbReference type="HAMAP" id="MF_01420">
    <property type="entry name" value="HTH_type_WhiA"/>
    <property type="match status" value="1"/>
</dbReference>
<dbReference type="InterPro" id="IPR027434">
    <property type="entry name" value="Homing_endonucl"/>
</dbReference>
<dbReference type="InterPro" id="IPR004042">
    <property type="entry name" value="Intein_endonuc_central"/>
</dbReference>
<dbReference type="InterPro" id="IPR018478">
    <property type="entry name" value="Sporu_reg_WhiA_N_dom"/>
</dbReference>
<dbReference type="InterPro" id="IPR003802">
    <property type="entry name" value="Sporulation_regulator_WhiA"/>
</dbReference>
<dbReference type="InterPro" id="IPR023054">
    <property type="entry name" value="Sporulation_regulator_WhiA_C"/>
</dbReference>
<dbReference type="InterPro" id="IPR039518">
    <property type="entry name" value="WhiA_LAGLIDADG_dom"/>
</dbReference>
<dbReference type="NCBIfam" id="TIGR00647">
    <property type="entry name" value="DNA_bind_WhiA"/>
    <property type="match status" value="1"/>
</dbReference>
<dbReference type="PANTHER" id="PTHR37307">
    <property type="entry name" value="CELL DIVISION PROTEIN WHIA-RELATED"/>
    <property type="match status" value="1"/>
</dbReference>
<dbReference type="PANTHER" id="PTHR37307:SF1">
    <property type="entry name" value="CELL DIVISION PROTEIN WHIA-RELATED"/>
    <property type="match status" value="1"/>
</dbReference>
<dbReference type="Pfam" id="PF02650">
    <property type="entry name" value="HTH_WhiA"/>
    <property type="match status" value="1"/>
</dbReference>
<dbReference type="Pfam" id="PF14527">
    <property type="entry name" value="LAGLIDADG_WhiA"/>
    <property type="match status" value="1"/>
</dbReference>
<dbReference type="Pfam" id="PF10298">
    <property type="entry name" value="WhiA_N"/>
    <property type="match status" value="1"/>
</dbReference>
<dbReference type="SUPFAM" id="SSF55608">
    <property type="entry name" value="Homing endonucleases"/>
    <property type="match status" value="1"/>
</dbReference>
<dbReference type="PROSITE" id="PS50819">
    <property type="entry name" value="INTEIN_ENDONUCLEASE"/>
    <property type="match status" value="1"/>
</dbReference>
<accession>Q97LP1</accession>
<comment type="function">
    <text evidence="1">Involved in cell division and chromosome segregation.</text>
</comment>
<comment type="similarity">
    <text evidence="1">Belongs to the WhiA family.</text>
</comment>
<reference key="1">
    <citation type="journal article" date="2001" name="J. Bacteriol.">
        <title>Genome sequence and comparative analysis of the solvent-producing bacterium Clostridium acetobutylicum.</title>
        <authorList>
            <person name="Noelling J."/>
            <person name="Breton G."/>
            <person name="Omelchenko M.V."/>
            <person name="Makarova K.S."/>
            <person name="Zeng Q."/>
            <person name="Gibson R."/>
            <person name="Lee H.M."/>
            <person name="Dubois J."/>
            <person name="Qiu D."/>
            <person name="Hitti J."/>
            <person name="Wolf Y.I."/>
            <person name="Tatusov R.L."/>
            <person name="Sabathe F."/>
            <person name="Doucette-Stamm L.A."/>
            <person name="Soucaille P."/>
            <person name="Daly M.J."/>
            <person name="Bennett G.N."/>
            <person name="Koonin E.V."/>
            <person name="Smith D.R."/>
        </authorList>
    </citation>
    <scope>NUCLEOTIDE SEQUENCE [LARGE SCALE GENOMIC DNA]</scope>
    <source>
        <strain>ATCC 824 / DSM 792 / JCM 1419 / IAM 19013 / LMG 5710 / NBRC 13948 / NRRL B-527 / VKM B-1787 / 2291 / W</strain>
    </source>
</reference>
<sequence length="317" mass="36015">MSFSSKVKSEVCRYDDYSKGEAIAVLSAVMKASGTLALEGNRKISFKIITENPAIARLIFKLLKKYFDIHTEIMMKKSNSLKKNNVYVVSITEDMGVRELLKTVGVMKNEDGIVTLSYDIPEFVVKDDESRKMYIRGAFLGGGSVSNPEKMYHLEFVTHNEDYASNLRDLINTYGLNSKVIQRKNSYVVYIKEGEQVVDLLNIIGAHSSLLELENIRIIKEMRNNINRLVNCETANLSKTVNASVRQIESIKLIEKQIGLSRLPENLREVAKLRLNYPDESLKELGKMLEPPVGKSGVNHRLRKIEKIAEELRKEGR</sequence>
<name>WHIA_CLOAB</name>
<evidence type="ECO:0000255" key="1">
    <source>
        <dbReference type="HAMAP-Rule" id="MF_01420"/>
    </source>
</evidence>
<organism>
    <name type="scientific">Clostridium acetobutylicum (strain ATCC 824 / DSM 792 / JCM 1419 / IAM 19013 / LMG 5710 / NBRC 13948 / NRRL B-527 / VKM B-1787 / 2291 / W)</name>
    <dbReference type="NCBI Taxonomy" id="272562"/>
    <lineage>
        <taxon>Bacteria</taxon>
        <taxon>Bacillati</taxon>
        <taxon>Bacillota</taxon>
        <taxon>Clostridia</taxon>
        <taxon>Eubacteriales</taxon>
        <taxon>Clostridiaceae</taxon>
        <taxon>Clostridium</taxon>
    </lineage>
</organism>